<keyword id="KW-1185">Reference proteome</keyword>
<keyword id="KW-0687">Ribonucleoprotein</keyword>
<keyword id="KW-0689">Ribosomal protein</keyword>
<feature type="chain" id="PRO_1000007041" description="Large ribosomal subunit protein bL12">
    <location>
        <begin position="1"/>
        <end position="125"/>
    </location>
</feature>
<sequence>MAFDKDAFLTALDSMSVMELNELVKAIEEKFGVSAAAMAAPAAGGGGGAAAAVEEKTEFNVVLLEAGANKVSVIKAVRELTGLGLKEAKDLVDGAPKNVKEAVAKADAEAAVKKLVEAGAKAELK</sequence>
<reference key="1">
    <citation type="journal article" date="2007" name="J. Bacteriol.">
        <title>Whole-genome analysis of the methyl tert-butyl ether-degrading beta-proteobacterium Methylibium petroleiphilum PM1.</title>
        <authorList>
            <person name="Kane S.R."/>
            <person name="Chakicherla A.Y."/>
            <person name="Chain P.S.G."/>
            <person name="Schmidt R."/>
            <person name="Shin M.W."/>
            <person name="Legler T.C."/>
            <person name="Scow K.M."/>
            <person name="Larimer F.W."/>
            <person name="Lucas S.M."/>
            <person name="Richardson P.M."/>
            <person name="Hristova K.R."/>
        </authorList>
    </citation>
    <scope>NUCLEOTIDE SEQUENCE [LARGE SCALE GENOMIC DNA]</scope>
    <source>
        <strain>ATCC BAA-1232 / LMG 22953 / PM1</strain>
    </source>
</reference>
<accession>A2SLG6</accession>
<dbReference type="EMBL" id="CP000555">
    <property type="protein sequence ID" value="ABM96405.1"/>
    <property type="molecule type" value="Genomic_DNA"/>
</dbReference>
<dbReference type="RefSeq" id="WP_011831026.1">
    <property type="nucleotide sequence ID" value="NC_008825.1"/>
</dbReference>
<dbReference type="SMR" id="A2SLG6"/>
<dbReference type="STRING" id="420662.Mpe_A3452"/>
<dbReference type="KEGG" id="mpt:Mpe_A3452"/>
<dbReference type="eggNOG" id="COG0222">
    <property type="taxonomic scope" value="Bacteria"/>
</dbReference>
<dbReference type="HOGENOM" id="CLU_086499_3_2_4"/>
<dbReference type="Proteomes" id="UP000000366">
    <property type="component" value="Chromosome"/>
</dbReference>
<dbReference type="GO" id="GO:0022625">
    <property type="term" value="C:cytosolic large ribosomal subunit"/>
    <property type="evidence" value="ECO:0007669"/>
    <property type="project" value="TreeGrafter"/>
</dbReference>
<dbReference type="GO" id="GO:0003729">
    <property type="term" value="F:mRNA binding"/>
    <property type="evidence" value="ECO:0007669"/>
    <property type="project" value="TreeGrafter"/>
</dbReference>
<dbReference type="GO" id="GO:0003735">
    <property type="term" value="F:structural constituent of ribosome"/>
    <property type="evidence" value="ECO:0007669"/>
    <property type="project" value="InterPro"/>
</dbReference>
<dbReference type="GO" id="GO:0006412">
    <property type="term" value="P:translation"/>
    <property type="evidence" value="ECO:0007669"/>
    <property type="project" value="UniProtKB-UniRule"/>
</dbReference>
<dbReference type="CDD" id="cd00387">
    <property type="entry name" value="Ribosomal_L7_L12"/>
    <property type="match status" value="1"/>
</dbReference>
<dbReference type="FunFam" id="3.30.1390.10:FF:000001">
    <property type="entry name" value="50S ribosomal protein L7/L12"/>
    <property type="match status" value="1"/>
</dbReference>
<dbReference type="Gene3D" id="3.30.1390.10">
    <property type="match status" value="1"/>
</dbReference>
<dbReference type="Gene3D" id="1.20.5.710">
    <property type="entry name" value="Single helix bin"/>
    <property type="match status" value="1"/>
</dbReference>
<dbReference type="HAMAP" id="MF_00368">
    <property type="entry name" value="Ribosomal_bL12"/>
    <property type="match status" value="1"/>
</dbReference>
<dbReference type="InterPro" id="IPR000206">
    <property type="entry name" value="Ribosomal_bL12"/>
</dbReference>
<dbReference type="InterPro" id="IPR013823">
    <property type="entry name" value="Ribosomal_bL12_C"/>
</dbReference>
<dbReference type="InterPro" id="IPR014719">
    <property type="entry name" value="Ribosomal_bL12_C/ClpS-like"/>
</dbReference>
<dbReference type="InterPro" id="IPR008932">
    <property type="entry name" value="Ribosomal_bL12_oligo"/>
</dbReference>
<dbReference type="InterPro" id="IPR036235">
    <property type="entry name" value="Ribosomal_bL12_oligo_N_sf"/>
</dbReference>
<dbReference type="NCBIfam" id="TIGR00855">
    <property type="entry name" value="L12"/>
    <property type="match status" value="1"/>
</dbReference>
<dbReference type="PANTHER" id="PTHR45987">
    <property type="entry name" value="39S RIBOSOMAL PROTEIN L12"/>
    <property type="match status" value="1"/>
</dbReference>
<dbReference type="PANTHER" id="PTHR45987:SF4">
    <property type="entry name" value="LARGE RIBOSOMAL SUBUNIT PROTEIN BL12M"/>
    <property type="match status" value="1"/>
</dbReference>
<dbReference type="Pfam" id="PF00542">
    <property type="entry name" value="Ribosomal_L12"/>
    <property type="match status" value="1"/>
</dbReference>
<dbReference type="Pfam" id="PF16320">
    <property type="entry name" value="Ribosomal_L12_N"/>
    <property type="match status" value="1"/>
</dbReference>
<dbReference type="SUPFAM" id="SSF54736">
    <property type="entry name" value="ClpS-like"/>
    <property type="match status" value="1"/>
</dbReference>
<dbReference type="SUPFAM" id="SSF48300">
    <property type="entry name" value="Ribosomal protein L7/12, oligomerisation (N-terminal) domain"/>
    <property type="match status" value="1"/>
</dbReference>
<organism>
    <name type="scientific">Methylibium petroleiphilum (strain ATCC BAA-1232 / LMG 22953 / PM1)</name>
    <dbReference type="NCBI Taxonomy" id="420662"/>
    <lineage>
        <taxon>Bacteria</taxon>
        <taxon>Pseudomonadati</taxon>
        <taxon>Pseudomonadota</taxon>
        <taxon>Betaproteobacteria</taxon>
        <taxon>Burkholderiales</taxon>
        <taxon>Sphaerotilaceae</taxon>
        <taxon>Methylibium</taxon>
    </lineage>
</organism>
<name>RL7_METPP</name>
<protein>
    <recommendedName>
        <fullName evidence="1">Large ribosomal subunit protein bL12</fullName>
    </recommendedName>
    <alternativeName>
        <fullName evidence="2">50S ribosomal protein L7/L12</fullName>
    </alternativeName>
</protein>
<proteinExistence type="inferred from homology"/>
<evidence type="ECO:0000255" key="1">
    <source>
        <dbReference type="HAMAP-Rule" id="MF_00368"/>
    </source>
</evidence>
<evidence type="ECO:0000305" key="2"/>
<gene>
    <name evidence="1" type="primary">rplL</name>
    <name type="ordered locus">Mpe_A3452</name>
</gene>
<comment type="function">
    <text evidence="1">Forms part of the ribosomal stalk which helps the ribosome interact with GTP-bound translation factors. Is thus essential for accurate translation.</text>
</comment>
<comment type="subunit">
    <text evidence="1">Homodimer. Part of the ribosomal stalk of the 50S ribosomal subunit. Forms a multimeric L10(L12)X complex, where L10 forms an elongated spine to which 2 to 4 L12 dimers bind in a sequential fashion. Binds GTP-bound translation factors.</text>
</comment>
<comment type="similarity">
    <text evidence="1">Belongs to the bacterial ribosomal protein bL12 family.</text>
</comment>